<proteinExistence type="inferred from homology"/>
<evidence type="ECO:0000255" key="1">
    <source>
        <dbReference type="HAMAP-Rule" id="MF_00657"/>
    </source>
</evidence>
<dbReference type="EC" id="1.14.11.-" evidence="1"/>
<dbReference type="EMBL" id="CP000352">
    <property type="protein sequence ID" value="ABF07724.1"/>
    <property type="molecule type" value="Genomic_DNA"/>
</dbReference>
<dbReference type="RefSeq" id="WP_011515666.1">
    <property type="nucleotide sequence ID" value="NC_007973.1"/>
</dbReference>
<dbReference type="SMR" id="Q1LQ52"/>
<dbReference type="STRING" id="266264.Rmet_0838"/>
<dbReference type="KEGG" id="rme:Rmet_0838"/>
<dbReference type="eggNOG" id="COG3128">
    <property type="taxonomic scope" value="Bacteria"/>
</dbReference>
<dbReference type="HOGENOM" id="CLU_106663_0_0_4"/>
<dbReference type="Proteomes" id="UP000002429">
    <property type="component" value="Chromosome"/>
</dbReference>
<dbReference type="GO" id="GO:0016706">
    <property type="term" value="F:2-oxoglutarate-dependent dioxygenase activity"/>
    <property type="evidence" value="ECO:0007669"/>
    <property type="project" value="UniProtKB-UniRule"/>
</dbReference>
<dbReference type="GO" id="GO:0005506">
    <property type="term" value="F:iron ion binding"/>
    <property type="evidence" value="ECO:0007669"/>
    <property type="project" value="UniProtKB-UniRule"/>
</dbReference>
<dbReference type="GO" id="GO:0031418">
    <property type="term" value="F:L-ascorbic acid binding"/>
    <property type="evidence" value="ECO:0007669"/>
    <property type="project" value="UniProtKB-KW"/>
</dbReference>
<dbReference type="GO" id="GO:0006974">
    <property type="term" value="P:DNA damage response"/>
    <property type="evidence" value="ECO:0007669"/>
    <property type="project" value="TreeGrafter"/>
</dbReference>
<dbReference type="GO" id="GO:0006879">
    <property type="term" value="P:intracellular iron ion homeostasis"/>
    <property type="evidence" value="ECO:0007669"/>
    <property type="project" value="TreeGrafter"/>
</dbReference>
<dbReference type="Gene3D" id="2.60.120.620">
    <property type="entry name" value="q2cbj1_9rhob like domain"/>
    <property type="match status" value="1"/>
</dbReference>
<dbReference type="Gene3D" id="4.10.860.20">
    <property type="entry name" value="Rabenosyn, Rab binding domain"/>
    <property type="match status" value="1"/>
</dbReference>
<dbReference type="HAMAP" id="MF_00657">
    <property type="entry name" value="Hydroxyl_YbiX"/>
    <property type="match status" value="1"/>
</dbReference>
<dbReference type="InterPro" id="IPR005123">
    <property type="entry name" value="Oxoglu/Fe-dep_dioxygenase_dom"/>
</dbReference>
<dbReference type="InterPro" id="IPR041097">
    <property type="entry name" value="PKHD_C"/>
</dbReference>
<dbReference type="InterPro" id="IPR023550">
    <property type="entry name" value="PKHD_hydroxylase"/>
</dbReference>
<dbReference type="InterPro" id="IPR006620">
    <property type="entry name" value="Pro_4_hyd_alph"/>
</dbReference>
<dbReference type="InterPro" id="IPR044862">
    <property type="entry name" value="Pro_4_hyd_alph_FE2OG_OXY"/>
</dbReference>
<dbReference type="NCBIfam" id="NF003974">
    <property type="entry name" value="PRK05467.1-3"/>
    <property type="match status" value="1"/>
</dbReference>
<dbReference type="NCBIfam" id="NF003975">
    <property type="entry name" value="PRK05467.1-4"/>
    <property type="match status" value="1"/>
</dbReference>
<dbReference type="PANTHER" id="PTHR41536">
    <property type="entry name" value="PKHD-TYPE HYDROXYLASE YBIX"/>
    <property type="match status" value="1"/>
</dbReference>
<dbReference type="PANTHER" id="PTHR41536:SF1">
    <property type="entry name" value="PKHD-TYPE HYDROXYLASE YBIX"/>
    <property type="match status" value="1"/>
</dbReference>
<dbReference type="Pfam" id="PF13640">
    <property type="entry name" value="2OG-FeII_Oxy_3"/>
    <property type="match status" value="1"/>
</dbReference>
<dbReference type="Pfam" id="PF18331">
    <property type="entry name" value="PKHD_C"/>
    <property type="match status" value="1"/>
</dbReference>
<dbReference type="SMART" id="SM00702">
    <property type="entry name" value="P4Hc"/>
    <property type="match status" value="1"/>
</dbReference>
<dbReference type="SUPFAM" id="SSF51197">
    <property type="entry name" value="Clavaminate synthase-like"/>
    <property type="match status" value="1"/>
</dbReference>
<dbReference type="PROSITE" id="PS51471">
    <property type="entry name" value="FE2OG_OXY"/>
    <property type="match status" value="1"/>
</dbReference>
<accession>Q1LQ52</accession>
<feature type="chain" id="PRO_0000346515" description="PKHD-type hydroxylase Rmet_0838">
    <location>
        <begin position="1"/>
        <end position="228"/>
    </location>
</feature>
<feature type="domain" description="Fe2OG dioxygenase" evidence="1">
    <location>
        <begin position="78"/>
        <end position="179"/>
    </location>
</feature>
<feature type="binding site" evidence="1">
    <location>
        <position position="96"/>
    </location>
    <ligand>
        <name>Fe cation</name>
        <dbReference type="ChEBI" id="CHEBI:24875"/>
    </ligand>
</feature>
<feature type="binding site" evidence="1">
    <location>
        <position position="98"/>
    </location>
    <ligand>
        <name>Fe cation</name>
        <dbReference type="ChEBI" id="CHEBI:24875"/>
    </ligand>
</feature>
<feature type="binding site" evidence="1">
    <location>
        <position position="160"/>
    </location>
    <ligand>
        <name>Fe cation</name>
        <dbReference type="ChEBI" id="CHEBI:24875"/>
    </ligand>
</feature>
<feature type="binding site" evidence="1">
    <location>
        <position position="170"/>
    </location>
    <ligand>
        <name>2-oxoglutarate</name>
        <dbReference type="ChEBI" id="CHEBI:16810"/>
    </ligand>
</feature>
<organism>
    <name type="scientific">Cupriavidus metallidurans (strain ATCC 43123 / DSM 2839 / NBRC 102507 / CH34)</name>
    <name type="common">Ralstonia metallidurans</name>
    <dbReference type="NCBI Taxonomy" id="266264"/>
    <lineage>
        <taxon>Bacteria</taxon>
        <taxon>Pseudomonadati</taxon>
        <taxon>Pseudomonadota</taxon>
        <taxon>Betaproteobacteria</taxon>
        <taxon>Burkholderiales</taxon>
        <taxon>Burkholderiaceae</taxon>
        <taxon>Cupriavidus</taxon>
    </lineage>
</organism>
<sequence length="228" mass="25453">MLIQIPNVLTPEEVRYCRQRLESSNWVDGRVTAGDLAAQSKLNLQIPVDSEVAQELGEFILTALGRNASYHSAALPLRVLPPMFNRYEGGMTFGTHVDNAIRTVPGTGGMRIRADVSSTLFLTDPDEYDGGELVIKDLYGSHTVKLPAGHMVVYPASSLHAVTPVTRGARWASFFWAQSMVKDDGQRTMLYELDLTIMEVRRQLGDDKDAVLALVNHYHNLLRRWAEL</sequence>
<name>Y838_CUPMC</name>
<keyword id="KW-0223">Dioxygenase</keyword>
<keyword id="KW-0408">Iron</keyword>
<keyword id="KW-0479">Metal-binding</keyword>
<keyword id="KW-0560">Oxidoreductase</keyword>
<keyword id="KW-1185">Reference proteome</keyword>
<keyword id="KW-0847">Vitamin C</keyword>
<comment type="cofactor">
    <cofactor evidence="1">
        <name>Fe(2+)</name>
        <dbReference type="ChEBI" id="CHEBI:29033"/>
    </cofactor>
    <text evidence="1">Binds 1 Fe(2+) ion per subunit.</text>
</comment>
<comment type="cofactor">
    <cofactor evidence="1">
        <name>L-ascorbate</name>
        <dbReference type="ChEBI" id="CHEBI:38290"/>
    </cofactor>
</comment>
<protein>
    <recommendedName>
        <fullName evidence="1">PKHD-type hydroxylase Rmet_0838</fullName>
        <ecNumber evidence="1">1.14.11.-</ecNumber>
    </recommendedName>
</protein>
<gene>
    <name type="ordered locus">Rmet_0838</name>
</gene>
<reference key="1">
    <citation type="journal article" date="2010" name="PLoS ONE">
        <title>The complete genome sequence of Cupriavidus metallidurans strain CH34, a master survivalist in harsh and anthropogenic environments.</title>
        <authorList>
            <person name="Janssen P.J."/>
            <person name="Van Houdt R."/>
            <person name="Moors H."/>
            <person name="Monsieurs P."/>
            <person name="Morin N."/>
            <person name="Michaux A."/>
            <person name="Benotmane M.A."/>
            <person name="Leys N."/>
            <person name="Vallaeys T."/>
            <person name="Lapidus A."/>
            <person name="Monchy S."/>
            <person name="Medigue C."/>
            <person name="Taghavi S."/>
            <person name="McCorkle S."/>
            <person name="Dunn J."/>
            <person name="van der Lelie D."/>
            <person name="Mergeay M."/>
        </authorList>
    </citation>
    <scope>NUCLEOTIDE SEQUENCE [LARGE SCALE GENOMIC DNA]</scope>
    <source>
        <strain>ATCC 43123 / DSM 2839 / NBRC 102507 / CH34</strain>
    </source>
</reference>